<name>TRF1_SCHPO</name>
<organism>
    <name type="scientific">Schizosaccharomyces pombe (strain 972 / ATCC 24843)</name>
    <name type="common">Fission yeast</name>
    <dbReference type="NCBI Taxonomy" id="284812"/>
    <lineage>
        <taxon>Eukaryota</taxon>
        <taxon>Fungi</taxon>
        <taxon>Dikarya</taxon>
        <taxon>Ascomycota</taxon>
        <taxon>Taphrinomycotina</taxon>
        <taxon>Schizosaccharomycetes</taxon>
        <taxon>Schizosaccharomycetales</taxon>
        <taxon>Schizosaccharomycetaceae</taxon>
        <taxon>Schizosaccharomyces</taxon>
    </lineage>
</organism>
<evidence type="ECO:0000255" key="1">
    <source>
        <dbReference type="PROSITE-ProRule" id="PRU00625"/>
    </source>
</evidence>
<evidence type="ECO:0000256" key="2">
    <source>
        <dbReference type="SAM" id="MobiDB-lite"/>
    </source>
</evidence>
<evidence type="ECO:0000269" key="3">
    <source>
    </source>
</evidence>
<evidence type="ECO:0000269" key="4">
    <source>
    </source>
</evidence>
<evidence type="ECO:0000269" key="5">
    <source>
    </source>
</evidence>
<evidence type="ECO:0000269" key="6">
    <source>
    </source>
</evidence>
<evidence type="ECO:0007829" key="7">
    <source>
        <dbReference type="PDB" id="6K5S"/>
    </source>
</evidence>
<evidence type="ECO:0007829" key="8">
    <source>
        <dbReference type="PDB" id="6K5U"/>
    </source>
</evidence>
<protein>
    <recommendedName>
        <fullName>Telomeric DNA-binding factor trf1</fullName>
    </recommendedName>
</protein>
<proteinExistence type="evidence at protein level"/>
<feature type="chain" id="PRO_0000290649" description="Telomeric DNA-binding factor trf1">
    <location>
        <begin position="1"/>
        <end position="485"/>
    </location>
</feature>
<feature type="domain" description="HTH myb-type" evidence="1">
    <location>
        <begin position="400"/>
        <end position="457"/>
    </location>
</feature>
<feature type="DNA-binding region" description="H-T-H motif" evidence="1">
    <location>
        <begin position="428"/>
        <end position="453"/>
    </location>
</feature>
<feature type="region of interest" description="Disordered" evidence="2">
    <location>
        <begin position="1"/>
        <end position="23"/>
    </location>
</feature>
<feature type="compositionally biased region" description="Basic and acidic residues" evidence="2">
    <location>
        <begin position="1"/>
        <end position="20"/>
    </location>
</feature>
<feature type="helix" evidence="7">
    <location>
        <begin position="102"/>
        <end position="116"/>
    </location>
</feature>
<feature type="helix" evidence="7">
    <location>
        <begin position="120"/>
        <end position="128"/>
    </location>
</feature>
<feature type="helix" evidence="7">
    <location>
        <begin position="133"/>
        <end position="152"/>
    </location>
</feature>
<feature type="strand" evidence="7">
    <location>
        <begin position="154"/>
        <end position="157"/>
    </location>
</feature>
<feature type="helix" evidence="7">
    <location>
        <begin position="161"/>
        <end position="163"/>
    </location>
</feature>
<feature type="helix" evidence="7">
    <location>
        <begin position="168"/>
        <end position="186"/>
    </location>
</feature>
<feature type="helix" evidence="7">
    <location>
        <begin position="194"/>
        <end position="205"/>
    </location>
</feature>
<feature type="helix" evidence="7">
    <location>
        <begin position="214"/>
        <end position="233"/>
    </location>
</feature>
<feature type="helix" evidence="7">
    <location>
        <begin position="239"/>
        <end position="246"/>
    </location>
</feature>
<feature type="helix" evidence="7">
    <location>
        <begin position="251"/>
        <end position="258"/>
    </location>
</feature>
<feature type="helix" evidence="7">
    <location>
        <begin position="269"/>
        <end position="287"/>
    </location>
</feature>
<feature type="helix" evidence="7">
    <location>
        <begin position="291"/>
        <end position="293"/>
    </location>
</feature>
<feature type="helix" evidence="7">
    <location>
        <begin position="294"/>
        <end position="297"/>
    </location>
</feature>
<feature type="helix" evidence="7">
    <location>
        <begin position="300"/>
        <end position="314"/>
    </location>
</feature>
<feature type="helix" evidence="8">
    <location>
        <begin position="410"/>
        <end position="422"/>
    </location>
</feature>
<feature type="helix" evidence="8">
    <location>
        <begin position="428"/>
        <end position="435"/>
    </location>
</feature>
<feature type="turn" evidence="8">
    <location>
        <begin position="444"/>
        <end position="447"/>
    </location>
</feature>
<feature type="helix" evidence="8">
    <location>
        <begin position="450"/>
        <end position="466"/>
    </location>
</feature>
<feature type="helix" evidence="8">
    <location>
        <begin position="473"/>
        <end position="477"/>
    </location>
</feature>
<gene>
    <name type="primary">trf1</name>
    <name type="ORF">SPBC19G7.13</name>
</gene>
<dbReference type="EMBL" id="AY584065">
    <property type="protein sequence ID" value="AAT51726.1"/>
    <property type="molecule type" value="mRNA"/>
</dbReference>
<dbReference type="EMBL" id="CU329671">
    <property type="protein sequence ID" value="CAA17067.1"/>
    <property type="molecule type" value="Genomic_DNA"/>
</dbReference>
<dbReference type="EMBL" id="AB027990">
    <property type="protein sequence ID" value="BAA87294.1"/>
    <property type="molecule type" value="Genomic_DNA"/>
</dbReference>
<dbReference type="PIR" id="T39844">
    <property type="entry name" value="T39844"/>
</dbReference>
<dbReference type="RefSeq" id="NP_595979.1">
    <property type="nucleotide sequence ID" value="NM_001021886.2"/>
</dbReference>
<dbReference type="PDB" id="6K5S">
    <property type="method" value="X-ray"/>
    <property type="resolution" value="1.90 A"/>
    <property type="chains" value="A/B/C/D=98-319"/>
</dbReference>
<dbReference type="PDB" id="6K5U">
    <property type="method" value="X-ray"/>
    <property type="resolution" value="2.08 A"/>
    <property type="chains" value="A/B=407-485"/>
</dbReference>
<dbReference type="PDBsum" id="6K5S"/>
<dbReference type="PDBsum" id="6K5U"/>
<dbReference type="SMR" id="Q6E434"/>
<dbReference type="BioGRID" id="277255">
    <property type="interactions" value="18"/>
</dbReference>
<dbReference type="FunCoup" id="Q6E434">
    <property type="interactions" value="12"/>
</dbReference>
<dbReference type="STRING" id="284812.Q6E434"/>
<dbReference type="iPTMnet" id="Q6E434"/>
<dbReference type="PaxDb" id="4896-SPBC19G7.13.1"/>
<dbReference type="EnsemblFungi" id="SPBC19G7.13.1">
    <property type="protein sequence ID" value="SPBC19G7.13.1:pep"/>
    <property type="gene ID" value="SPBC19G7.13"/>
</dbReference>
<dbReference type="GeneID" id="2540732"/>
<dbReference type="KEGG" id="spo:2540732"/>
<dbReference type="PomBase" id="SPBC19G7.13"/>
<dbReference type="VEuPathDB" id="FungiDB:SPBC19G7.13"/>
<dbReference type="eggNOG" id="ENOG502QRT9">
    <property type="taxonomic scope" value="Eukaryota"/>
</dbReference>
<dbReference type="HOGENOM" id="CLU_008791_4_0_1"/>
<dbReference type="InParanoid" id="Q6E434"/>
<dbReference type="OMA" id="EIACYIH"/>
<dbReference type="PhylomeDB" id="Q6E434"/>
<dbReference type="PRO" id="PR:Q6E434"/>
<dbReference type="Proteomes" id="UP000002485">
    <property type="component" value="Chromosome II"/>
</dbReference>
<dbReference type="GO" id="GO:0000785">
    <property type="term" value="C:chromatin"/>
    <property type="evidence" value="ECO:0000314"/>
    <property type="project" value="PomBase"/>
</dbReference>
<dbReference type="GO" id="GO:0140445">
    <property type="term" value="C:chromosome, telomeric repeat region"/>
    <property type="evidence" value="ECO:0000314"/>
    <property type="project" value="PomBase"/>
</dbReference>
<dbReference type="GO" id="GO:0005634">
    <property type="term" value="C:nucleus"/>
    <property type="evidence" value="ECO:0000314"/>
    <property type="project" value="PomBase"/>
</dbReference>
<dbReference type="GO" id="GO:0003691">
    <property type="term" value="F:double-stranded telomeric DNA binding"/>
    <property type="evidence" value="ECO:0000314"/>
    <property type="project" value="PomBase"/>
</dbReference>
<dbReference type="GO" id="GO:0042803">
    <property type="term" value="F:protein homodimerization activity"/>
    <property type="evidence" value="ECO:0007669"/>
    <property type="project" value="InterPro"/>
</dbReference>
<dbReference type="GO" id="GO:0000723">
    <property type="term" value="P:telomere maintenance"/>
    <property type="evidence" value="ECO:0000315"/>
    <property type="project" value="PomBase"/>
</dbReference>
<dbReference type="GO" id="GO:0010833">
    <property type="term" value="P:telomere maintenance via telomere lengthening"/>
    <property type="evidence" value="ECO:0000318"/>
    <property type="project" value="GO_Central"/>
</dbReference>
<dbReference type="CDD" id="cd11660">
    <property type="entry name" value="SANT_TRF"/>
    <property type="match status" value="1"/>
</dbReference>
<dbReference type="FunFam" id="1.10.10.60:FF:000137">
    <property type="entry name" value="MYB DNA binding protein"/>
    <property type="match status" value="1"/>
</dbReference>
<dbReference type="Gene3D" id="1.10.10.60">
    <property type="entry name" value="Homeodomain-like"/>
    <property type="match status" value="1"/>
</dbReference>
<dbReference type="InterPro" id="IPR009057">
    <property type="entry name" value="Homeodomain-like_sf"/>
</dbReference>
<dbReference type="InterPro" id="IPR017930">
    <property type="entry name" value="Myb_dom"/>
</dbReference>
<dbReference type="InterPro" id="IPR001005">
    <property type="entry name" value="SANT/Myb"/>
</dbReference>
<dbReference type="InterPro" id="IPR013867">
    <property type="entry name" value="Telomere_rpt-bd_fac_dimer_dom"/>
</dbReference>
<dbReference type="InterPro" id="IPR052833">
    <property type="entry name" value="Telomeric_DNA-bd_trans-reg"/>
</dbReference>
<dbReference type="PANTHER" id="PTHR47807">
    <property type="entry name" value="PROTEIN TBF1"/>
    <property type="match status" value="1"/>
</dbReference>
<dbReference type="PANTHER" id="PTHR47807:SF1">
    <property type="entry name" value="PROTEIN TBF1"/>
    <property type="match status" value="1"/>
</dbReference>
<dbReference type="Pfam" id="PF00249">
    <property type="entry name" value="Myb_DNA-binding"/>
    <property type="match status" value="1"/>
</dbReference>
<dbReference type="Pfam" id="PF08558">
    <property type="entry name" value="TRF"/>
    <property type="match status" value="1"/>
</dbReference>
<dbReference type="SMART" id="SM00717">
    <property type="entry name" value="SANT"/>
    <property type="match status" value="1"/>
</dbReference>
<dbReference type="SUPFAM" id="SSF46689">
    <property type="entry name" value="Homeodomain-like"/>
    <property type="match status" value="1"/>
</dbReference>
<dbReference type="PROSITE" id="PS51294">
    <property type="entry name" value="HTH_MYB"/>
    <property type="match status" value="1"/>
</dbReference>
<keyword id="KW-0002">3D-structure</keyword>
<keyword id="KW-0131">Cell cycle</keyword>
<keyword id="KW-0903">Direct protein sequencing</keyword>
<keyword id="KW-0238">DNA-binding</keyword>
<keyword id="KW-0539">Nucleus</keyword>
<keyword id="KW-1185">Reference proteome</keyword>
<comment type="function">
    <text>Binds the telomeric double-stranded TTACAGG repeat and regulates telomere length.</text>
</comment>
<comment type="subunit">
    <text evidence="5">Homodimer.</text>
</comment>
<comment type="subcellular location">
    <subcellularLocation>
        <location evidence="1 3 4 6">Nucleus</location>
    </subcellularLocation>
    <text>Enriched throughout the euchromatic hemisphere.</text>
</comment>
<comment type="disruption phenotype">
    <text evidence="6">Cells arrest in interphase and have an aberrant chromatin structure.</text>
</comment>
<reference key="1">
    <citation type="journal article" date="2008" name="J. Biol. Chem.">
        <title>Identification and characterization of an essential telomeric repeat binding factor in fission yeast.</title>
        <authorList>
            <person name="Pitt C.W."/>
            <person name="Valente L.P."/>
            <person name="Rhodes D."/>
            <person name="Simonsson T."/>
        </authorList>
    </citation>
    <scope>NUCLEOTIDE SEQUENCE [MRNA]</scope>
    <scope>PROTEIN SEQUENCE OF 76-83 AND 407-414</scope>
    <scope>SUBUNIT</scope>
    <scope>DNA-BINDING</scope>
</reference>
<reference key="2">
    <citation type="journal article" date="2002" name="Nature">
        <title>The genome sequence of Schizosaccharomyces pombe.</title>
        <authorList>
            <person name="Wood V."/>
            <person name="Gwilliam R."/>
            <person name="Rajandream M.A."/>
            <person name="Lyne M.H."/>
            <person name="Lyne R."/>
            <person name="Stewart A."/>
            <person name="Sgouros J.G."/>
            <person name="Peat N."/>
            <person name="Hayles J."/>
            <person name="Baker S.G."/>
            <person name="Basham D."/>
            <person name="Bowman S."/>
            <person name="Brooks K."/>
            <person name="Brown D."/>
            <person name="Brown S."/>
            <person name="Chillingworth T."/>
            <person name="Churcher C.M."/>
            <person name="Collins M."/>
            <person name="Connor R."/>
            <person name="Cronin A."/>
            <person name="Davis P."/>
            <person name="Feltwell T."/>
            <person name="Fraser A."/>
            <person name="Gentles S."/>
            <person name="Goble A."/>
            <person name="Hamlin N."/>
            <person name="Harris D.E."/>
            <person name="Hidalgo J."/>
            <person name="Hodgson G."/>
            <person name="Holroyd S."/>
            <person name="Hornsby T."/>
            <person name="Howarth S."/>
            <person name="Huckle E.J."/>
            <person name="Hunt S."/>
            <person name="Jagels K."/>
            <person name="James K.D."/>
            <person name="Jones L."/>
            <person name="Jones M."/>
            <person name="Leather S."/>
            <person name="McDonald S."/>
            <person name="McLean J."/>
            <person name="Mooney P."/>
            <person name="Moule S."/>
            <person name="Mungall K.L."/>
            <person name="Murphy L.D."/>
            <person name="Niblett D."/>
            <person name="Odell C."/>
            <person name="Oliver K."/>
            <person name="O'Neil S."/>
            <person name="Pearson D."/>
            <person name="Quail M.A."/>
            <person name="Rabbinowitsch E."/>
            <person name="Rutherford K.M."/>
            <person name="Rutter S."/>
            <person name="Saunders D."/>
            <person name="Seeger K."/>
            <person name="Sharp S."/>
            <person name="Skelton J."/>
            <person name="Simmonds M.N."/>
            <person name="Squares R."/>
            <person name="Squares S."/>
            <person name="Stevens K."/>
            <person name="Taylor K."/>
            <person name="Taylor R.G."/>
            <person name="Tivey A."/>
            <person name="Walsh S.V."/>
            <person name="Warren T."/>
            <person name="Whitehead S."/>
            <person name="Woodward J.R."/>
            <person name="Volckaert G."/>
            <person name="Aert R."/>
            <person name="Robben J."/>
            <person name="Grymonprez B."/>
            <person name="Weltjens I."/>
            <person name="Vanstreels E."/>
            <person name="Rieger M."/>
            <person name="Schaefer M."/>
            <person name="Mueller-Auer S."/>
            <person name="Gabel C."/>
            <person name="Fuchs M."/>
            <person name="Duesterhoeft A."/>
            <person name="Fritzc C."/>
            <person name="Holzer E."/>
            <person name="Moestl D."/>
            <person name="Hilbert H."/>
            <person name="Borzym K."/>
            <person name="Langer I."/>
            <person name="Beck A."/>
            <person name="Lehrach H."/>
            <person name="Reinhardt R."/>
            <person name="Pohl T.M."/>
            <person name="Eger P."/>
            <person name="Zimmermann W."/>
            <person name="Wedler H."/>
            <person name="Wambutt R."/>
            <person name="Purnelle B."/>
            <person name="Goffeau A."/>
            <person name="Cadieu E."/>
            <person name="Dreano S."/>
            <person name="Gloux S."/>
            <person name="Lelaure V."/>
            <person name="Mottier S."/>
            <person name="Galibert F."/>
            <person name="Aves S.J."/>
            <person name="Xiang Z."/>
            <person name="Hunt C."/>
            <person name="Moore K."/>
            <person name="Hurst S.M."/>
            <person name="Lucas M."/>
            <person name="Rochet M."/>
            <person name="Gaillardin C."/>
            <person name="Tallada V.A."/>
            <person name="Garzon A."/>
            <person name="Thode G."/>
            <person name="Daga R.R."/>
            <person name="Cruzado L."/>
            <person name="Jimenez J."/>
            <person name="Sanchez M."/>
            <person name="del Rey F."/>
            <person name="Benito J."/>
            <person name="Dominguez A."/>
            <person name="Revuelta J.L."/>
            <person name="Moreno S."/>
            <person name="Armstrong J."/>
            <person name="Forsburg S.L."/>
            <person name="Cerutti L."/>
            <person name="Lowe T."/>
            <person name="McCombie W.R."/>
            <person name="Paulsen I."/>
            <person name="Potashkin J."/>
            <person name="Shpakovski G.V."/>
            <person name="Ussery D."/>
            <person name="Barrell B.G."/>
            <person name="Nurse P."/>
        </authorList>
    </citation>
    <scope>NUCLEOTIDE SEQUENCE [LARGE SCALE GENOMIC DNA]</scope>
    <source>
        <strain>972 / ATCC 24843</strain>
    </source>
</reference>
<reference key="3">
    <citation type="journal article" date="2000" name="Genes Cells">
        <title>Large-scale screening of intracellular protein localization in living fission yeast cells by the use of a GFP-fusion genomic DNA library.</title>
        <authorList>
            <person name="Ding D.-Q."/>
            <person name="Tomita Y."/>
            <person name="Yamamoto A."/>
            <person name="Chikashige Y."/>
            <person name="Haraguchi T."/>
            <person name="Hiraoka Y."/>
        </authorList>
    </citation>
    <scope>NUCLEOTIDE SEQUENCE [LARGE SCALE GENOMIC DNA] OF 190-384</scope>
    <scope>SUBCELLULAR LOCATION</scope>
    <source>
        <strain>ATCC 38364 / 968</strain>
    </source>
</reference>
<reference key="4">
    <citation type="journal article" date="2006" name="Nat. Biotechnol.">
        <title>ORFeome cloning and global analysis of protein localization in the fission yeast Schizosaccharomyces pombe.</title>
        <authorList>
            <person name="Matsuyama A."/>
            <person name="Arai R."/>
            <person name="Yashiroda Y."/>
            <person name="Shirai A."/>
            <person name="Kamata A."/>
            <person name="Sekido S."/>
            <person name="Kobayashi Y."/>
            <person name="Hashimoto A."/>
            <person name="Hamamoto M."/>
            <person name="Hiraoka Y."/>
            <person name="Horinouchi S."/>
            <person name="Yoshida M."/>
        </authorList>
    </citation>
    <scope>SUBCELLULAR LOCATION [LARGE SCALE ANALYSIS]</scope>
</reference>
<reference key="5">
    <citation type="journal article" date="2009" name="Eukaryot. Cell">
        <title>Functional differentiation of tbf1 orthologues in fission and budding yeasts.</title>
        <authorList>
            <person name="Cockell M.M."/>
            <person name="Lo Presti L."/>
            <person name="Cerutti L."/>
            <person name="Cano Del Rosario E."/>
            <person name="Hauser P.M."/>
            <person name="Simanis V."/>
        </authorList>
    </citation>
    <scope>SUBCELLULAR LOCATION</scope>
    <scope>DISRUPTION PHENOTYPE</scope>
</reference>
<accession>Q6E434</accession>
<accession>O42961</accession>
<accession>Q9US79</accession>
<sequence>MSKRSLDPSDDFKGQKRLAIDPESTALEQDRQMLQQLSEQNSELEPQNVAPNAEIPLGFDLSGIQFNMTPDFYLRMNQGMDYAFNQPNPIATPQQLLRTSLIPTLGNLSNIILSILGKPVQEASAIVTNPASEMGMAFTKVMNMFRMVKDIYTEESFIYSSAIGMRTPSQRSTTRRANLAIFLAAVYGALQIGFFHLNENFLEVFAPDESNILTNQGTLYMELKTQAYISAMAQAERPKGDILNDLFPSDMAHRFLIRRNAKLDDKLTYVEKQIIEKCTARKERLANFSPQEALNEVYPWGKFLSEIACYIHNNYSSISAIPIPANSFKRRSKKNGLRFKAGEAESSPSESGSDLTDSLAFGIPSSTFDGSSETQNVSSVVLYDQVRHMTNNNLNNKRTRRVANRRSWTKEEEEALLDGLDLVKGPRWSQILELYGPGGKKSEVLKYRNQVQLKDKARNMKLFFLKSGQVVPAALQCVTGDLRRD</sequence>